<organism>
    <name type="scientific">Escherichia coli (strain 55989 / EAEC)</name>
    <dbReference type="NCBI Taxonomy" id="585055"/>
    <lineage>
        <taxon>Bacteria</taxon>
        <taxon>Pseudomonadati</taxon>
        <taxon>Pseudomonadota</taxon>
        <taxon>Gammaproteobacteria</taxon>
        <taxon>Enterobacterales</taxon>
        <taxon>Enterobacteriaceae</taxon>
        <taxon>Escherichia</taxon>
    </lineage>
</organism>
<gene>
    <name evidence="2" type="primary">aes</name>
    <name type="ordered locus">EC55989_0489</name>
</gene>
<sequence>MKPENKLPVLDLISAEMKTVVNTLQPDLPSWPATGTIAEQRQYYTLERRFWNAGAPEMATRAYMVPTKYGQVETRLFCPQPDSPATLFYLHGGGFILGNLDTHDRIMRLLASYSQCTVIGIDYPLSPEARFPQAIEEIVAACCYFHQQAEDYQINMSRIGFAGDSAGAMLALASALWLRDKQIDCGKIAGVLLWYGLYGLRDSVTRRLLGGVWDGLTQQDLQMYEEAYLSNDADRESPYYCLFNNDLTREVPPCFIAGAEFDPLLDDSRLLYQTLAAHQQPCEFKLYPGTLHAFLHYSRMMKTADEALRDGAQFFTAQL</sequence>
<accession>B7L7A1</accession>
<reference key="1">
    <citation type="journal article" date="2009" name="PLoS Genet.">
        <title>Organised genome dynamics in the Escherichia coli species results in highly diverse adaptive paths.</title>
        <authorList>
            <person name="Touchon M."/>
            <person name="Hoede C."/>
            <person name="Tenaillon O."/>
            <person name="Barbe V."/>
            <person name="Baeriswyl S."/>
            <person name="Bidet P."/>
            <person name="Bingen E."/>
            <person name="Bonacorsi S."/>
            <person name="Bouchier C."/>
            <person name="Bouvet O."/>
            <person name="Calteau A."/>
            <person name="Chiapello H."/>
            <person name="Clermont O."/>
            <person name="Cruveiller S."/>
            <person name="Danchin A."/>
            <person name="Diard M."/>
            <person name="Dossat C."/>
            <person name="Karoui M.E."/>
            <person name="Frapy E."/>
            <person name="Garry L."/>
            <person name="Ghigo J.M."/>
            <person name="Gilles A.M."/>
            <person name="Johnson J."/>
            <person name="Le Bouguenec C."/>
            <person name="Lescat M."/>
            <person name="Mangenot S."/>
            <person name="Martinez-Jehanne V."/>
            <person name="Matic I."/>
            <person name="Nassif X."/>
            <person name="Oztas S."/>
            <person name="Petit M.A."/>
            <person name="Pichon C."/>
            <person name="Rouy Z."/>
            <person name="Ruf C.S."/>
            <person name="Schneider D."/>
            <person name="Tourret J."/>
            <person name="Vacherie B."/>
            <person name="Vallenet D."/>
            <person name="Medigue C."/>
            <person name="Rocha E.P.C."/>
            <person name="Denamur E."/>
        </authorList>
    </citation>
    <scope>NUCLEOTIDE SEQUENCE [LARGE SCALE GENOMIC DNA]</scope>
    <source>
        <strain>55989 / EAEC</strain>
    </source>
</reference>
<keyword id="KW-0963">Cytoplasm</keyword>
<keyword id="KW-0378">Hydrolase</keyword>
<keyword id="KW-1185">Reference proteome</keyword>
<keyword id="KW-0719">Serine esterase</keyword>
<name>AES_ECO55</name>
<proteinExistence type="inferred from homology"/>
<comment type="function">
    <text evidence="2">Displays esterase activity towards short chain fatty esters (acyl chain length of up to 8 carbons). Able to hydrolyze triacetylglycerol (triacetin) and tributyrylglycerol (tributyrin), but not trioleylglycerol (triolein) or cholesterol oleate. Negatively regulates MalT activity by antagonizing maltotriose binding. Inhibits MelA galactosidase activity.</text>
</comment>
<comment type="subunit">
    <text evidence="2">Homodimer. Interacts with MalT and MelA.</text>
</comment>
<comment type="subcellular location">
    <subcellularLocation>
        <location evidence="2">Cytoplasm</location>
    </subcellularLocation>
</comment>
<comment type="similarity">
    <text evidence="2">Belongs to the 'GDXG' lipolytic enzyme family.</text>
</comment>
<evidence type="ECO:0000250" key="1">
    <source>
        <dbReference type="UniProtKB" id="Q5NUF3"/>
    </source>
</evidence>
<evidence type="ECO:0000255" key="2">
    <source>
        <dbReference type="HAMAP-Rule" id="MF_01958"/>
    </source>
</evidence>
<protein>
    <recommendedName>
        <fullName evidence="2">Acetyl esterase</fullName>
        <ecNumber evidence="2">3.1.1.-</ecNumber>
    </recommendedName>
</protein>
<dbReference type="EC" id="3.1.1.-" evidence="2"/>
<dbReference type="EMBL" id="CU928145">
    <property type="protein sequence ID" value="CAU96362.1"/>
    <property type="molecule type" value="Genomic_DNA"/>
</dbReference>
<dbReference type="RefSeq" id="WP_000801832.1">
    <property type="nucleotide sequence ID" value="NC_011748.1"/>
</dbReference>
<dbReference type="SMR" id="B7L7A1"/>
<dbReference type="ESTHER" id="ecoli-Aes">
    <property type="family name" value="Acetyl_esterase"/>
</dbReference>
<dbReference type="MEROPS" id="S09.A47"/>
<dbReference type="KEGG" id="eck:EC55989_0489"/>
<dbReference type="HOGENOM" id="CLU_012494_6_4_6"/>
<dbReference type="Proteomes" id="UP000000746">
    <property type="component" value="Chromosome"/>
</dbReference>
<dbReference type="GO" id="GO:0005737">
    <property type="term" value="C:cytoplasm"/>
    <property type="evidence" value="ECO:0007669"/>
    <property type="project" value="UniProtKB-SubCell"/>
</dbReference>
<dbReference type="GO" id="GO:0052689">
    <property type="term" value="F:carboxylic ester hydrolase activity"/>
    <property type="evidence" value="ECO:0007669"/>
    <property type="project" value="UniProtKB-UniRule"/>
</dbReference>
<dbReference type="FunFam" id="3.40.50.1820:FF:000035">
    <property type="entry name" value="Acetyl esterase"/>
    <property type="match status" value="1"/>
</dbReference>
<dbReference type="Gene3D" id="3.40.50.1820">
    <property type="entry name" value="alpha/beta hydrolase"/>
    <property type="match status" value="1"/>
</dbReference>
<dbReference type="HAMAP" id="MF_01958">
    <property type="entry name" value="Acetyl_esterase"/>
    <property type="match status" value="1"/>
</dbReference>
<dbReference type="InterPro" id="IPR013094">
    <property type="entry name" value="AB_hydrolase_3"/>
</dbReference>
<dbReference type="InterPro" id="IPR029058">
    <property type="entry name" value="AB_hydrolase_fold"/>
</dbReference>
<dbReference type="InterPro" id="IPR023508">
    <property type="entry name" value="Acetyl_esterase"/>
</dbReference>
<dbReference type="InterPro" id="IPR050300">
    <property type="entry name" value="GDXG_lipolytic_enzyme"/>
</dbReference>
<dbReference type="InterPro" id="IPR002168">
    <property type="entry name" value="Lipase_GDXG_HIS_AS"/>
</dbReference>
<dbReference type="InterPro" id="IPR033140">
    <property type="entry name" value="Lipase_GDXG_put_SER_AS"/>
</dbReference>
<dbReference type="NCBIfam" id="NF007547">
    <property type="entry name" value="PRK10162.1"/>
    <property type="match status" value="1"/>
</dbReference>
<dbReference type="PANTHER" id="PTHR48081">
    <property type="entry name" value="AB HYDROLASE SUPERFAMILY PROTEIN C4A8.06C"/>
    <property type="match status" value="1"/>
</dbReference>
<dbReference type="PANTHER" id="PTHR48081:SF8">
    <property type="entry name" value="ALPHA_BETA HYDROLASE FOLD-3 DOMAIN-CONTAINING PROTEIN-RELATED"/>
    <property type="match status" value="1"/>
</dbReference>
<dbReference type="Pfam" id="PF07859">
    <property type="entry name" value="Abhydrolase_3"/>
    <property type="match status" value="1"/>
</dbReference>
<dbReference type="SUPFAM" id="SSF53474">
    <property type="entry name" value="alpha/beta-Hydrolases"/>
    <property type="match status" value="1"/>
</dbReference>
<dbReference type="PROSITE" id="PS01173">
    <property type="entry name" value="LIPASE_GDXG_HIS"/>
    <property type="match status" value="1"/>
</dbReference>
<dbReference type="PROSITE" id="PS01174">
    <property type="entry name" value="LIPASE_GDXG_SER"/>
    <property type="match status" value="1"/>
</dbReference>
<feature type="chain" id="PRO_1000188977" description="Acetyl esterase">
    <location>
        <begin position="1"/>
        <end position="319"/>
    </location>
</feature>
<feature type="short sequence motif" description="Involved in the stabilization of the negatively charged intermediate by the formation of the oxyanion hole" evidence="1">
    <location>
        <begin position="91"/>
        <end position="93"/>
    </location>
</feature>
<feature type="active site" evidence="2">
    <location>
        <position position="165"/>
    </location>
</feature>
<feature type="active site" evidence="2">
    <location>
        <position position="262"/>
    </location>
</feature>
<feature type="active site" evidence="2">
    <location>
        <position position="292"/>
    </location>
</feature>